<evidence type="ECO:0000255" key="1">
    <source>
        <dbReference type="HAMAP-Rule" id="MF_00176"/>
    </source>
</evidence>
<comment type="function">
    <text evidence="1">Catalyzes the attachment of serine to tRNA(Ser). Is also able to aminoacylate tRNA(Sec) with serine, to form the misacylated tRNA L-seryl-tRNA(Sec), which will be further converted into selenocysteinyl-tRNA(Sec).</text>
</comment>
<comment type="catalytic activity">
    <reaction evidence="1">
        <text>tRNA(Ser) + L-serine + ATP = L-seryl-tRNA(Ser) + AMP + diphosphate + H(+)</text>
        <dbReference type="Rhea" id="RHEA:12292"/>
        <dbReference type="Rhea" id="RHEA-COMP:9669"/>
        <dbReference type="Rhea" id="RHEA-COMP:9703"/>
        <dbReference type="ChEBI" id="CHEBI:15378"/>
        <dbReference type="ChEBI" id="CHEBI:30616"/>
        <dbReference type="ChEBI" id="CHEBI:33019"/>
        <dbReference type="ChEBI" id="CHEBI:33384"/>
        <dbReference type="ChEBI" id="CHEBI:78442"/>
        <dbReference type="ChEBI" id="CHEBI:78533"/>
        <dbReference type="ChEBI" id="CHEBI:456215"/>
        <dbReference type="EC" id="6.1.1.11"/>
    </reaction>
</comment>
<comment type="catalytic activity">
    <reaction evidence="1">
        <text>tRNA(Sec) + L-serine + ATP = L-seryl-tRNA(Sec) + AMP + diphosphate + H(+)</text>
        <dbReference type="Rhea" id="RHEA:42580"/>
        <dbReference type="Rhea" id="RHEA-COMP:9742"/>
        <dbReference type="Rhea" id="RHEA-COMP:10128"/>
        <dbReference type="ChEBI" id="CHEBI:15378"/>
        <dbReference type="ChEBI" id="CHEBI:30616"/>
        <dbReference type="ChEBI" id="CHEBI:33019"/>
        <dbReference type="ChEBI" id="CHEBI:33384"/>
        <dbReference type="ChEBI" id="CHEBI:78442"/>
        <dbReference type="ChEBI" id="CHEBI:78533"/>
        <dbReference type="ChEBI" id="CHEBI:456215"/>
        <dbReference type="EC" id="6.1.1.11"/>
    </reaction>
</comment>
<comment type="pathway">
    <text evidence="1">Aminoacyl-tRNA biosynthesis; selenocysteinyl-tRNA(Sec) biosynthesis; L-seryl-tRNA(Sec) from L-serine and tRNA(Sec): step 1/1.</text>
</comment>
<comment type="subunit">
    <text evidence="1">Homodimer. The tRNA molecule binds across the dimer.</text>
</comment>
<comment type="subcellular location">
    <subcellularLocation>
        <location evidence="1">Cytoplasm</location>
    </subcellularLocation>
</comment>
<comment type="domain">
    <text evidence="1">Consists of two distinct domains, a catalytic core and a N-terminal extension that is involved in tRNA binding.</text>
</comment>
<comment type="similarity">
    <text evidence="1">Belongs to the class-II aminoacyl-tRNA synthetase family. Type-1 seryl-tRNA synthetase subfamily.</text>
</comment>
<gene>
    <name evidence="1" type="primary">serS</name>
    <name type="ordered locus">Tcr_0768</name>
</gene>
<organism>
    <name type="scientific">Hydrogenovibrio crunogenus (strain DSM 25203 / XCL-2)</name>
    <name type="common">Thiomicrospira crunogena</name>
    <dbReference type="NCBI Taxonomy" id="317025"/>
    <lineage>
        <taxon>Bacteria</taxon>
        <taxon>Pseudomonadati</taxon>
        <taxon>Pseudomonadota</taxon>
        <taxon>Gammaproteobacteria</taxon>
        <taxon>Thiotrichales</taxon>
        <taxon>Piscirickettsiaceae</taxon>
        <taxon>Hydrogenovibrio</taxon>
    </lineage>
</organism>
<accession>Q31HK9</accession>
<proteinExistence type="inferred from homology"/>
<keyword id="KW-0030">Aminoacyl-tRNA synthetase</keyword>
<keyword id="KW-0067">ATP-binding</keyword>
<keyword id="KW-0963">Cytoplasm</keyword>
<keyword id="KW-0436">Ligase</keyword>
<keyword id="KW-0547">Nucleotide-binding</keyword>
<keyword id="KW-0648">Protein biosynthesis</keyword>
<dbReference type="EC" id="6.1.1.11" evidence="1"/>
<dbReference type="EMBL" id="CP000109">
    <property type="protein sequence ID" value="ABB41364.1"/>
    <property type="molecule type" value="Genomic_DNA"/>
</dbReference>
<dbReference type="SMR" id="Q31HK9"/>
<dbReference type="STRING" id="317025.Tcr_0768"/>
<dbReference type="KEGG" id="tcx:Tcr_0768"/>
<dbReference type="eggNOG" id="COG0172">
    <property type="taxonomic scope" value="Bacteria"/>
</dbReference>
<dbReference type="HOGENOM" id="CLU_023797_1_1_6"/>
<dbReference type="OrthoDB" id="9804647at2"/>
<dbReference type="UniPathway" id="UPA00906">
    <property type="reaction ID" value="UER00895"/>
</dbReference>
<dbReference type="GO" id="GO:0005737">
    <property type="term" value="C:cytoplasm"/>
    <property type="evidence" value="ECO:0007669"/>
    <property type="project" value="UniProtKB-SubCell"/>
</dbReference>
<dbReference type="GO" id="GO:0005524">
    <property type="term" value="F:ATP binding"/>
    <property type="evidence" value="ECO:0007669"/>
    <property type="project" value="UniProtKB-UniRule"/>
</dbReference>
<dbReference type="GO" id="GO:0004828">
    <property type="term" value="F:serine-tRNA ligase activity"/>
    <property type="evidence" value="ECO:0007669"/>
    <property type="project" value="UniProtKB-UniRule"/>
</dbReference>
<dbReference type="GO" id="GO:0016260">
    <property type="term" value="P:selenocysteine biosynthetic process"/>
    <property type="evidence" value="ECO:0007669"/>
    <property type="project" value="UniProtKB-UniRule"/>
</dbReference>
<dbReference type="GO" id="GO:0006434">
    <property type="term" value="P:seryl-tRNA aminoacylation"/>
    <property type="evidence" value="ECO:0007669"/>
    <property type="project" value="UniProtKB-UniRule"/>
</dbReference>
<dbReference type="CDD" id="cd00770">
    <property type="entry name" value="SerRS_core"/>
    <property type="match status" value="1"/>
</dbReference>
<dbReference type="Gene3D" id="3.30.930.10">
    <property type="entry name" value="Bira Bifunctional Protein, Domain 2"/>
    <property type="match status" value="1"/>
</dbReference>
<dbReference type="Gene3D" id="1.10.287.40">
    <property type="entry name" value="Serine-tRNA synthetase, tRNA binding domain"/>
    <property type="match status" value="1"/>
</dbReference>
<dbReference type="HAMAP" id="MF_00176">
    <property type="entry name" value="Ser_tRNA_synth_type1"/>
    <property type="match status" value="1"/>
</dbReference>
<dbReference type="InterPro" id="IPR002314">
    <property type="entry name" value="aa-tRNA-synt_IIb"/>
</dbReference>
<dbReference type="InterPro" id="IPR006195">
    <property type="entry name" value="aa-tRNA-synth_II"/>
</dbReference>
<dbReference type="InterPro" id="IPR045864">
    <property type="entry name" value="aa-tRNA-synth_II/BPL/LPL"/>
</dbReference>
<dbReference type="InterPro" id="IPR002317">
    <property type="entry name" value="Ser-tRNA-ligase_type_1"/>
</dbReference>
<dbReference type="InterPro" id="IPR015866">
    <property type="entry name" value="Ser-tRNA-synth_1_N"/>
</dbReference>
<dbReference type="InterPro" id="IPR042103">
    <property type="entry name" value="SerRS_1_N_sf"/>
</dbReference>
<dbReference type="InterPro" id="IPR033729">
    <property type="entry name" value="SerRS_core"/>
</dbReference>
<dbReference type="InterPro" id="IPR010978">
    <property type="entry name" value="tRNA-bd_arm"/>
</dbReference>
<dbReference type="NCBIfam" id="TIGR00414">
    <property type="entry name" value="serS"/>
    <property type="match status" value="1"/>
</dbReference>
<dbReference type="PANTHER" id="PTHR43697:SF1">
    <property type="entry name" value="SERINE--TRNA LIGASE"/>
    <property type="match status" value="1"/>
</dbReference>
<dbReference type="PANTHER" id="PTHR43697">
    <property type="entry name" value="SERYL-TRNA SYNTHETASE"/>
    <property type="match status" value="1"/>
</dbReference>
<dbReference type="Pfam" id="PF02403">
    <property type="entry name" value="Seryl_tRNA_N"/>
    <property type="match status" value="1"/>
</dbReference>
<dbReference type="Pfam" id="PF00587">
    <property type="entry name" value="tRNA-synt_2b"/>
    <property type="match status" value="1"/>
</dbReference>
<dbReference type="PIRSF" id="PIRSF001529">
    <property type="entry name" value="Ser-tRNA-synth_IIa"/>
    <property type="match status" value="1"/>
</dbReference>
<dbReference type="PRINTS" id="PR00981">
    <property type="entry name" value="TRNASYNTHSER"/>
</dbReference>
<dbReference type="SUPFAM" id="SSF55681">
    <property type="entry name" value="Class II aaRS and biotin synthetases"/>
    <property type="match status" value="1"/>
</dbReference>
<dbReference type="SUPFAM" id="SSF46589">
    <property type="entry name" value="tRNA-binding arm"/>
    <property type="match status" value="1"/>
</dbReference>
<dbReference type="PROSITE" id="PS50862">
    <property type="entry name" value="AA_TRNA_LIGASE_II"/>
    <property type="match status" value="1"/>
</dbReference>
<protein>
    <recommendedName>
        <fullName evidence="1">Serine--tRNA ligase</fullName>
        <ecNumber evidence="1">6.1.1.11</ecNumber>
    </recommendedName>
    <alternativeName>
        <fullName evidence="1">Seryl-tRNA synthetase</fullName>
        <shortName evidence="1">SerRS</shortName>
    </alternativeName>
    <alternativeName>
        <fullName evidence="1">Seryl-tRNA(Ser/Sec) synthetase</fullName>
    </alternativeName>
</protein>
<sequence length="428" mass="47927">MLDSKLLRTDLETVAAKLKTRGFVLDTAQIDELEAKRKDWQVKTQELQAERNSRSKGIGKAKAAGEDIQPLLDEVANLGDQLEEAKHASDAIQAEIELIYAGIPNLPHDSTPVGNSEDDNVEVRQWGTPKTFDFDIKDHVDLAEARGWYDNDAAVKIASSRFSVLKGPMAKLQRALTQFMLDSHTDAGYEEVYVPFLVNQDSLHGTGQLPKFEADLYKIDKHEEHDTSDRDLYLIPTAEVPVTNLFRDEIIDEDTLPLKFTAHTPCFRSEAGSYGRDTKGLIRQHQFEKVEMVQIVHPDQSYEALESLTQQAESILQKLELPYRVMSLCTGDIGFSAAKTYDLEVWLPGQQAYREISSCSNFEDFQARRLKARFRKGQDKPQLAHTLNGSGLAVGRTLVAVLENYQNADGSITVPTALRSYLGGVEIL</sequence>
<name>SYS_HYDCU</name>
<reference key="1">
    <citation type="journal article" date="2006" name="PLoS Biol.">
        <title>The genome of deep-sea vent chemolithoautotroph Thiomicrospira crunogena XCL-2.</title>
        <authorList>
            <person name="Scott K.M."/>
            <person name="Sievert S.M."/>
            <person name="Abril F.N."/>
            <person name="Ball L.A."/>
            <person name="Barrett C.J."/>
            <person name="Blake R.A."/>
            <person name="Boller A.J."/>
            <person name="Chain P.S.G."/>
            <person name="Clark J.A."/>
            <person name="Davis C.R."/>
            <person name="Detter C."/>
            <person name="Do K.F."/>
            <person name="Dobrinski K.P."/>
            <person name="Faza B.I."/>
            <person name="Fitzpatrick K.A."/>
            <person name="Freyermuth S.K."/>
            <person name="Harmer T.L."/>
            <person name="Hauser L.J."/>
            <person name="Huegler M."/>
            <person name="Kerfeld C.A."/>
            <person name="Klotz M.G."/>
            <person name="Kong W.W."/>
            <person name="Land M."/>
            <person name="Lapidus A."/>
            <person name="Larimer F.W."/>
            <person name="Longo D.L."/>
            <person name="Lucas S."/>
            <person name="Malfatti S.A."/>
            <person name="Massey S.E."/>
            <person name="Martin D.D."/>
            <person name="McCuddin Z."/>
            <person name="Meyer F."/>
            <person name="Moore J.L."/>
            <person name="Ocampo L.H. Jr."/>
            <person name="Paul J.H."/>
            <person name="Paulsen I.T."/>
            <person name="Reep D.K."/>
            <person name="Ren Q."/>
            <person name="Ross R.L."/>
            <person name="Sato P.Y."/>
            <person name="Thomas P."/>
            <person name="Tinkham L.E."/>
            <person name="Zeruth G.T."/>
        </authorList>
    </citation>
    <scope>NUCLEOTIDE SEQUENCE [LARGE SCALE GENOMIC DNA]</scope>
    <source>
        <strain>DSM 25203 / XCL-2</strain>
    </source>
</reference>
<feature type="chain" id="PRO_1000019858" description="Serine--tRNA ligase">
    <location>
        <begin position="1"/>
        <end position="428"/>
    </location>
</feature>
<feature type="binding site" evidence="1">
    <location>
        <begin position="237"/>
        <end position="239"/>
    </location>
    <ligand>
        <name>L-serine</name>
        <dbReference type="ChEBI" id="CHEBI:33384"/>
    </ligand>
</feature>
<feature type="binding site" evidence="1">
    <location>
        <begin position="268"/>
        <end position="270"/>
    </location>
    <ligand>
        <name>ATP</name>
        <dbReference type="ChEBI" id="CHEBI:30616"/>
    </ligand>
</feature>
<feature type="binding site" evidence="1">
    <location>
        <position position="291"/>
    </location>
    <ligand>
        <name>L-serine</name>
        <dbReference type="ChEBI" id="CHEBI:33384"/>
    </ligand>
</feature>
<feature type="binding site" evidence="1">
    <location>
        <begin position="355"/>
        <end position="358"/>
    </location>
    <ligand>
        <name>ATP</name>
        <dbReference type="ChEBI" id="CHEBI:30616"/>
    </ligand>
</feature>
<feature type="binding site" evidence="1">
    <location>
        <position position="390"/>
    </location>
    <ligand>
        <name>L-serine</name>
        <dbReference type="ChEBI" id="CHEBI:33384"/>
    </ligand>
</feature>